<sequence length="4427" mass="507698">MSSKAEKKQRLSGRGSSQASWSGRATRAAVATQEQGNAPAVSEPELQAELPKEEPEPRLEGPQAQSEESVEPEADVKPLFLSRAALTGLADAVWTQEHDAILEHFAQDPTESILTIFIDPCFGLKLELGMPVQTQNQLVYFIRQAPVPITWENFEATVQFGTVRGPYIPALLRLLGGVFAPQIFANTGWPESIRNHFASHLHKFLACLTDTRYKLEGHTVLYIPAEAMNMKPEMVIKDKELVQRLETSMIHWTRQIKEMLSAQETVETGENLGPLEEIEFWRNRCMDLSGISKQLVKKGVKHVESILHLAKSSYLAPFMKLAQQIQDGSRQAQSNLTFLSILKEPYQELAFMKPKDISSKLPKLISLIRIIWVNSPHYNTRERLTSLFRKVCDCQYHFARWEDGKQGPLPCFFGAQGPQITRNLLEIEDIFHKNLHTLRAVRGGILDVKNTCWHEDYNKFRAGIKDLEVMTQNLITSAFELVRDVPHGVLLLDTFHRLASREAIKRTYDKKAVDLYMLFNSELALVNRERNKKWPDLEPYVAQYSGKARWVHILRRRIDRVMTCLAGAHFLPRIGTGKESVHTYQQMVQAIDELVRKTFQEWTSSLDKDCIRRLDTPLLRISQEKAGMLDVNFDKSLLILFAEIDYWERLLFETPHYVVNVAERAEDLRILRENLLLVARDYNRIIAMLSPDEQALFKERIRLLDKKIHPGLKKLHWALKGASAFFITECRIHASKVQMIVNEFKASTLTIGWRAQEMSEKLLVRISGKRVYRDLEFEEDQREHRAAVQQKLMNLHQDVVTIMTNSYEVFKNDGPEIQQQWMLYMIRLDRMMEDALRLNVKWSLLELSKAINGDGKTSPNPLFQVLVILKNDLQGSVAQVEFSPTLQTLAGVVNDIGNHLFSTISVFCHLPDILTKRKLHREPIQTVVEQDEDIKKIQTQISSGMTNNASLLQNYLKTWDMYREIWEINKDSFIHRYQRLNPPVSSFVADIARYTEVANNVQKEETVTNIQFVLLDCSHLKFSLVQHCNEWQNKFATLLREMAAGRLLELHTYLKENAEKISRPPQTLEELGVSLQLVDALKHDLANVETQIPPIHEQFAILEKYEVPVEDSVLEMLDSLNGEWVVFQQTLLDSKQMLKKHKEKFKTGLIHSADDFKKKAHTLLEDFEFKGHFTSNVGYMSALDQITQVRAMLMAMREEENSLRANLGIFKIEQPPSKDLQNLEKELDALQQIWEIARDWEENWNEWKTGRFLILQTETMETTAHGLFRRLTKLAKEYKDRNWEIIETTRSKIEQFKRTMPLISDLRNPALRERHWDQVRDEIQREFDQESESFTLEQIVELGMDQHVEKIGEISASATKELAIEVALQNIAKTWDVTQLDIVPYKDKGHHRLRGTEEVFQALEDNQVALSTMKASRFVKAFEKDVDHWERCLSLILEVIEMILTVQRQWMYLENIFLGEDIRKQLPNESTLFDQVNSNWKAIMDRMNKDNNALRSTHHPGLLDTLIEMNTILEDIQKSLDMYLETKRHIFPRFYFLSNDDLLEILGQSRNPEAVQPHLKKCFDNIKLLRIQKVGGPSSKWEAVGMFSGDGEYIDFLHSVFLEGPVESWLGDVEQTMRVTLRDLLRNCHLALRKFLNKRDKWVKEWAGQVVITASQIQWTADVTKCLLTAKERADKKILKVMKKNQVSILNKYSEAIRGNLTKIMRLKIVALVTIEIHARDVLEKLYKSGLMDVNSFDWLSQLRFYWEKDLDDCVIRQTNTQFQYNYEYLGNSGRLVITPLTDRCYMTLTTALHLHRGGSPKGPAGTGKTETVKDLGKALGIYVIVVNCSEGLDYKSMGRMYSGLAQTGAWGCFDEFNRINIEVLSVVAHQILCILSALAAGLTHFHFDGFEINLVWSCGIFITMNPGYAGRTELPENLKSMFRPIAMVVPDSTLIAEIILFGEGFGNCKILAKKVYTLYSLAVQQLSRQDHYDFGLRALTSLLRYAGKKRRLQPDLTDEEVLLLSMRDMNIAKLTSVDAPLFNAIVQDLFPNIELPVIDYGKLRETVEQEIRDMGLQSTPFTLTKVFQLYETKNSRHSTMIVGCTGSGKTASWRILQASLSSLCRAGDPNFNIVREFPLNPKALSLGELYGEYDLSTNEWTDGILSSVMRTACADEKPDEKWILFDGPVDTLWIENMNSVMDDNKVLTLINGERIAMPEQVSLLFEVEDLAMASPATVSRCGMVYTDYADLGWKPYVQSWLEKRPKAEVEPLQRMFEKLINKMLAFKKDNCKELVPLPEYSGITSLCKLYSALATPENGVNPADGENYVTMVEMTFVFSMIWSVCASVDEEGRKRIDSYLREIEGSFPNKDTVYEYFVDPKIRSWTSFEDKLPKSWRYPPNAPFYKIMVPTVDTVRYNYLVSSLVANQNPILLVGPVGTGKTSIAQSVLQSLPSSQWSVLVVNMSAQTTSNNVQSIIESRVEKRTKGVYVPFGGKSMITFMDDLNMPAKDMFGSQPPLELIRLWIDYGFWYDRTKQTIKYIREMFLMAAMGPPGGGRTVISPRLRSRFNIINMTFPTKSQIIRIFGTMINQKLQDFEEEVKPIGNVVTEATLDMYNTVVQRFLPTPTKMHYLFNLRDISKVFQGMLRANKDFHDTKSSITRLWIHECFRVFSDRLVDAADTEAFMGIISDKLGSFFDLTFHHLCPSKRPPIFGDFLKEPKVYEDLTDLTVLKTVMETALNEYNLSPSVVPMQLVLFREAIEHITRIVRVIGQPRGNMLLVGIGGSGRQSLARLASSICDYTTFQIEVTKHYRKQEFRDDIKRLYRQAGVELKTTSFIFVDTQIADESFLEDINNILSSGEVPNLYKPDEFEEIQSHIIDQARVEQVPESSDSLFAYLIERVQNNLHIVLCLSPMGDPFRNWIRQYPALVNCTTINWFSEWPQEALLEVAEKCLIGVDLGTQENIHRKVAQIFVTMHWSVAQYSQKMLLELRRHNYVTPTKYLELLSGYKKLLGEKRQELLAQANKLRTGLFKIDETREKVQVMSLELEDAKKKVAEFQKQCEEYLVIIVQQKREADEQQKAVTANSEKIAVEEIKCQALADNAQKDLEEALPALEEAMRALESLNKKDIGEIKSYGRPPAQVEIVMQAVMILRGNEPTWAEAKRQLGEQNFIKSLINFDKDNISDKVLKKIGAYCAQPDFQPDIIGRVSLAAKSLCMWVRAMELYGRLYRVVEPKRIRMNAALAQLREKQAALAEAQEKLREVAEKLEMLKKQYDEKLAQKEELRKKSEEMELKLERAGMLVSGLAGEKARWEETVQGLEEDLGYLVGDCLLAAAFLSYMGPFLTNYRDEIVNQIWIGKIWELQVPCSPSFAIDNFLCNPTKVRDWNIQGLPSDAFSTENGIIVTRGNRWALMIDPQAQALKWIKNMEGGQGLKIIDLQMSDYLRILEHAIHFGYPVLLQNVQEYLDPTLNPMLNKSVARIGGRLLMRIGDKEVEYNTNFRFYITTKLSNPHYSPETSAKTTIVNFAVKEQGLEAQLLGIVVRKERPELEEQKDSLVINIAAGKRKLKELEDEILRLLNEATGSLLDDVQLVNTLHTSKITATEVTEQLETSETTEINTDLAREAYRPCAQRASILFFVLNDMGCIDPMYQFSLDAYISLFILSIDKSHRSNKLEDRIDYLNDYHTYAVYRYTCRTLFERHKLLFSFHMCAKILETSGKLNMDEYNFFLRGGVVLDREGQMDNPCSSWLADAYWDNITELDKLTNFHGLMNSFEQYPRDWHLWYTNAAPEKAMLPGEWENACNEMQRMLIVRSLRQDRVAFCVTSFIITNLGSRFIEPPVLNMKSVLEDSTPRSPLVFILSPGVDPTSALLQLAEHMGMAQRFHALSLGQGQAPIAARLLREGVTQGHWVFLANCHLSLSWMPNLDKLVEQLQVEDPHPSFRLWLSSIPHPDFPISILQVSIKMTTEPPKGLKANMTRLYQLMSEPQFSRCSKPAKYKKLLFSLCFFHSVLLERKKFLQLGWNIIYGFNDSDFEVSENLLSLYLDEYEETPWDALKYLIAGINYGGHVTDDWDRRLLTTYINDYFCDQSLSTPFHRLSALETYFIPKDGSLASYKEYISLLPGMDPPEAFGQHPNADVASQITEAQTLFDTLLSLQPQITPTRAGGQTREEKVLELAADVKQKIPEMIDYEGTQKLLALDPSPLNVVLLQEIQRYNTLMQTILFSLTDLEKGIQGLIVMSTSLEEIFNCIFDAHVPPLWGKAYPSQKPLAAWTRDLAMRVEQFELWASRARPPVIFWLSGFTFPTGFLTAVLQSSARQNNVSVDSLSWEFIVSTVDDSNLVYPPKDGVWVRGLYLEGAGWDRKNSCLVEAEPMQLVCLMPTIHFRPAESRKKSAKGMYSCPCYYYPNRAGSSDRASFVIGIDLRSGAMTPDHWIKRGTALLMSLDS</sequence>
<comment type="function">
    <text evidence="6">As part of the axonemal inner dynein arm complex plays a central role in ciliary beat (PubMed:30811583). Expressed in sperm flagellum, it is required for sperm motility (PubMed:30811583). Dyneins are microtubule-based molecular motors possessing ATPase activities that can convert the chemical energy of ATP into relative sliding between adjacent microtubule doublets to generate ciliary bending (PubMed:30811583).</text>
</comment>
<comment type="subunit">
    <text evidence="2 6">Part of the axonemal inner dynein arm complex that consists of at least two heavy chains and a number of intermediate and light chains (PubMed:30811583). Interacts with DNAI4 (By similarity).</text>
</comment>
<comment type="subcellular location">
    <subcellularLocation>
        <location evidence="2">Cytoplasm</location>
        <location evidence="2">Cytoskeleton</location>
        <location evidence="2">Cilium axoneme</location>
    </subcellularLocation>
    <subcellularLocation>
        <location evidence="6">Cytoplasm</location>
        <location evidence="6">Cytoskeleton</location>
        <location evidence="6">Flagellum axoneme</location>
    </subcellularLocation>
</comment>
<comment type="alternative products">
    <event type="alternative splicing"/>
    <isoform>
        <id>Q9P225-1</id>
        <name>1</name>
        <sequence type="displayed"/>
    </isoform>
    <isoform>
        <id>Q9P225-2</id>
        <name>2</name>
        <sequence type="described" ref="VSP_031916 VSP_031917 VSP_031918"/>
    </isoform>
    <isoform>
        <id>Q9P225-3</id>
        <name>3</name>
        <sequence type="described" ref="VSP_031913 VSP_031914 VSP_031915"/>
    </isoform>
</comment>
<comment type="tissue specificity">
    <text evidence="7 8">Expressed primarily in trachea and testis, 2 tissues containing axonemal structures. Also expressed in lung. Expressed in spermatozoa (at protein level) (PubMed:31178125).</text>
</comment>
<comment type="domain">
    <text evidence="1">Dynein heavy chains probably consist of an N-terminal stem (which binds cargo and interacts with other dynein components), and the head or motor domain. The motor contains six tandemly-linked AAA domains in the head, which form a ring. A stalk-like structure (formed by two of the coiled coil domains) protrudes between AAA 4 and AAA 5 and terminates in a microtubule-binding site. A seventh domain may also contribute to this ring; it is not clear whether the N-terminus or the C-terminus forms this extra domain. There are four well-conserved and two non-conserved ATPase sites, one per AAA domain. Probably only one of these (within AAA 1) actually hydrolyzes ATP, the others may serve a regulatory function (By similarity).</text>
</comment>
<comment type="RNA editing" locationType="Not_applicable">
    <molecule>Isoform 3</molecule>
    <text evidence="5">Exon 13 is extensively edited in brain.</text>
</comment>
<comment type="disease" evidence="6">
    <disease id="DI-05965">
        <name>Spermatogenic failure 45</name>
        <acronym>SPGF45</acronym>
        <description>An autosomal recessive infertility disorder caused by spermatogenesis defects resulting in severe teratozoospermia. SPGF45 is characterized by multiple morphologic abnormalities of spermatozoa flagella. Some spermatozoa also show abnormalities of the head.</description>
        <dbReference type="MIM" id="619094"/>
    </disease>
    <text>The disease is caused by variants affecting the gene represented in this entry.</text>
</comment>
<comment type="similarity">
    <text evidence="11">Belongs to the dynein heavy chain family.</text>
</comment>
<comment type="sequence caution" evidence="11">
    <conflict type="frameshift">
        <sequence resource="EMBL" id="AK128517"/>
    </conflict>
</comment>
<comment type="sequence caution" evidence="11">
    <conflict type="erroneous initiation">
        <sequence resource="EMBL-CDS" id="BAA96027"/>
    </conflict>
    <text>Extended N-terminus.</text>
</comment>
<gene>
    <name evidence="12" type="primary">DNAH2</name>
    <name type="synonym">DNAHC2</name>
    <name type="synonym">DNHD3</name>
    <name type="synonym">KIAA1503</name>
</gene>
<organism>
    <name type="scientific">Homo sapiens</name>
    <name type="common">Human</name>
    <dbReference type="NCBI Taxonomy" id="9606"/>
    <lineage>
        <taxon>Eukaryota</taxon>
        <taxon>Metazoa</taxon>
        <taxon>Chordata</taxon>
        <taxon>Craniata</taxon>
        <taxon>Vertebrata</taxon>
        <taxon>Euteleostomi</taxon>
        <taxon>Mammalia</taxon>
        <taxon>Eutheria</taxon>
        <taxon>Euarchontoglires</taxon>
        <taxon>Primates</taxon>
        <taxon>Haplorrhini</taxon>
        <taxon>Catarrhini</taxon>
        <taxon>Hominidae</taxon>
        <taxon>Homo</taxon>
    </lineage>
</organism>
<accession>Q9P225</accession>
<accession>A8K992</accession>
<accession>B5MDX5</accession>
<accession>O15434</accession>
<accession>Q6PIH3</accession>
<accession>Q6ZR42</accession>
<protein>
    <recommendedName>
        <fullName evidence="11">Dynein axonemal heavy chain 2</fullName>
    </recommendedName>
    <alternativeName>
        <fullName>Axonemal beta dynein heavy chain 2</fullName>
    </alternativeName>
    <alternativeName>
        <fullName>Ciliary dynein heavy chain 2</fullName>
    </alternativeName>
    <alternativeName>
        <fullName>Dynein heavy chain domain-containing protein 3</fullName>
    </alternativeName>
</protein>
<proteinExistence type="evidence at protein level"/>
<keyword id="KW-0002">3D-structure</keyword>
<keyword id="KW-0025">Alternative splicing</keyword>
<keyword id="KW-0067">ATP-binding</keyword>
<keyword id="KW-0966">Cell projection</keyword>
<keyword id="KW-0969">Cilium</keyword>
<keyword id="KW-0175">Coiled coil</keyword>
<keyword id="KW-0963">Cytoplasm</keyword>
<keyword id="KW-0206">Cytoskeleton</keyword>
<keyword id="KW-0225">Disease variant</keyword>
<keyword id="KW-0243">Dynein</keyword>
<keyword id="KW-0282">Flagellum</keyword>
<keyword id="KW-0493">Microtubule</keyword>
<keyword id="KW-0505">Motor protein</keyword>
<keyword id="KW-0547">Nucleotide-binding</keyword>
<keyword id="KW-1267">Proteomics identification</keyword>
<keyword id="KW-1185">Reference proteome</keyword>
<keyword id="KW-0677">Repeat</keyword>
<keyword id="KW-0691">RNA editing</keyword>
<keyword id="KW-0802">TPR repeat</keyword>
<feature type="chain" id="PRO_0000322542" description="Dynein axonemal heavy chain 2">
    <location>
        <begin position="1"/>
        <end position="4427"/>
    </location>
</feature>
<feature type="repeat" description="TPR 1">
    <location>
        <begin position="1404"/>
        <end position="1439"/>
    </location>
</feature>
<feature type="repeat" description="TPR 2">
    <location>
        <begin position="2721"/>
        <end position="2754"/>
    </location>
</feature>
<feature type="repeat" description="TPR 3">
    <location>
        <begin position="3072"/>
        <end position="3105"/>
    </location>
</feature>
<feature type="repeat" description="TPR 4">
    <location>
        <begin position="4072"/>
        <end position="4104"/>
    </location>
</feature>
<feature type="repeat" description="TPR 5">
    <location>
        <begin position="4105"/>
        <end position="4140"/>
    </location>
</feature>
<feature type="region of interest" description="Stem" evidence="1">
    <location>
        <begin position="1"/>
        <end position="1764"/>
    </location>
</feature>
<feature type="region of interest" description="Disordered" evidence="4">
    <location>
        <begin position="1"/>
        <end position="73"/>
    </location>
</feature>
<feature type="region of interest" description="AAA 1" evidence="1">
    <location>
        <begin position="1765"/>
        <end position="1986"/>
    </location>
</feature>
<feature type="region of interest" description="AAA 2" evidence="1">
    <location>
        <begin position="2046"/>
        <end position="2273"/>
    </location>
</feature>
<feature type="region of interest" description="AAA 3" evidence="1">
    <location>
        <begin position="2378"/>
        <end position="2625"/>
    </location>
</feature>
<feature type="region of interest" description="AAA 4" evidence="1">
    <location>
        <begin position="2722"/>
        <end position="2974"/>
    </location>
</feature>
<feature type="region of interest" description="Stalk" evidence="1">
    <location>
        <begin position="2989"/>
        <end position="3272"/>
    </location>
</feature>
<feature type="region of interest" description="AAA 5" evidence="1">
    <location>
        <begin position="3358"/>
        <end position="3588"/>
    </location>
</feature>
<feature type="region of interest" description="AAA 6" evidence="1">
    <location>
        <begin position="3804"/>
        <end position="4023"/>
    </location>
</feature>
<feature type="coiled-coil region" evidence="3">
    <location>
        <begin position="3012"/>
        <end position="3049"/>
    </location>
</feature>
<feature type="coiled-coil region" evidence="3">
    <location>
        <begin position="3216"/>
        <end position="3304"/>
    </location>
</feature>
<feature type="coiled-coil region" evidence="3">
    <location>
        <begin position="3523"/>
        <end position="3567"/>
    </location>
</feature>
<feature type="compositionally biased region" description="Polar residues" evidence="4">
    <location>
        <begin position="14"/>
        <end position="23"/>
    </location>
</feature>
<feature type="compositionally biased region" description="Basic and acidic residues" evidence="4">
    <location>
        <begin position="50"/>
        <end position="59"/>
    </location>
</feature>
<feature type="binding site" evidence="3">
    <location>
        <begin position="1803"/>
        <end position="1810"/>
    </location>
    <ligand>
        <name>ATP</name>
        <dbReference type="ChEBI" id="CHEBI:30616"/>
    </ligand>
</feature>
<feature type="binding site" evidence="3">
    <location>
        <begin position="2084"/>
        <end position="2091"/>
    </location>
    <ligand>
        <name>ATP</name>
        <dbReference type="ChEBI" id="CHEBI:30616"/>
    </ligand>
</feature>
<feature type="binding site" evidence="3">
    <location>
        <begin position="2416"/>
        <end position="2423"/>
    </location>
    <ligand>
        <name>ATP</name>
        <dbReference type="ChEBI" id="CHEBI:30616"/>
    </ligand>
</feature>
<feature type="binding site" evidence="3">
    <location>
        <begin position="2762"/>
        <end position="2769"/>
    </location>
    <ligand>
        <name>ATP</name>
        <dbReference type="ChEBI" id="CHEBI:30616"/>
    </ligand>
</feature>
<feature type="splice variant" id="VSP_031913" description="In isoform 3." evidence="9 10">
    <original>K</original>
    <variation>KMSNEIIRLCCHAISLDRIFEGYVSSSKEDLQGCILCCHAWKDHYVQAVQMHIQFSSRGWVLDQTSIFAQVDAFVQRCKDLIE</variation>
    <location>
        <position position="390"/>
    </location>
</feature>
<feature type="splice variant" id="VSP_031914" description="In isoform 3." evidence="9 10">
    <original>SLLILFAEIDYWERLLFETPHYVVNVAERAEDLRILRENLLLVARDYNRIIAMLSPDEQALFKERIRLLDKKIHPGLKKLHWALKGASAFFITECRIHASKVQMIVNEFKASTLTIGWRAQEMSEKLLVRISGKRVYRDLEFEEDQREHRAAVQQ</original>
    <variation>YRSHLAPFPYTPLLQLSQEFHSHLLTPLFIILSLSHTICLLSSFYFFFSSFIFVSPHLPPCYQHFNFTTYLKTQQNKTMIGQARWLTPVIPALWEAEVGASLEPRSLRTAWATWQNPVSAKNTKISWAWWHKPVVSATWEGEVGGSPEPGRQRLQ</variation>
    <location>
        <begin position="636"/>
        <end position="790"/>
    </location>
</feature>
<feature type="splice variant" id="VSP_031915" description="In isoform 3." evidence="9 10">
    <location>
        <begin position="791"/>
        <end position="4427"/>
    </location>
</feature>
<feature type="splice variant" id="VSP_031916" description="In isoform 2." evidence="9">
    <location>
        <begin position="3062"/>
        <end position="3100"/>
    </location>
</feature>
<feature type="splice variant" id="VSP_031917" description="In isoform 2." evidence="9">
    <original>EKGIQGLIVMSTSLEEIFNCIFDAH</original>
    <variation>EIPSCVSHKSERVVLELSAVKHPRQ</variation>
    <location>
        <begin position="4211"/>
        <end position="4235"/>
    </location>
</feature>
<feature type="splice variant" id="VSP_031918" description="In isoform 2." evidence="9">
    <location>
        <begin position="4236"/>
        <end position="4427"/>
    </location>
</feature>
<feature type="sequence variant" id="VAR_039407" description="In dbSNP:rs35664870.">
    <original>A</original>
    <variation>V</variation>
    <location>
        <position position="100"/>
    </location>
</feature>
<feature type="sequence variant" id="VAR_039408" description="In dbSNP:rs3744254.">
    <original>S</original>
    <variation>T</variation>
    <location>
        <position position="312"/>
    </location>
</feature>
<feature type="sequence variant" id="VAR_039409" description="In dbSNP:rs11868946.">
    <original>E</original>
    <variation>G</variation>
    <location>
        <position position="1326"/>
    </location>
</feature>
<feature type="sequence variant" id="VAR_085171" description="In SPGF45; decreased protein abundance; loss of inner dynein arm assembly; in spermatozoa from patients." evidence="6">
    <original>R</original>
    <variation>C</variation>
    <location>
        <position position="1924"/>
    </location>
</feature>
<feature type="sequence variant" id="VAR_085172" description="In SPGF45; uncertain significance; decreased protein abundance." evidence="6">
    <original>S</original>
    <variation>R</variation>
    <location>
        <position position="2320"/>
    </location>
</feature>
<feature type="sequence variant" id="VAR_039410" description="In dbSNP:rs11656500.">
    <original>R</original>
    <variation>H</variation>
    <location>
        <position position="2548"/>
    </location>
</feature>
<feature type="sequence variant" id="VAR_060134" description="In dbSNP:rs2309808.">
    <original>R</original>
    <variation>H</variation>
    <location>
        <position position="2904"/>
    </location>
</feature>
<feature type="sequence variant" id="VAR_085173" description="In SPGF45; uncertain significance; decreased protein abundance." evidence="6">
    <original>R</original>
    <variation>W</variation>
    <location>
        <position position="3100"/>
    </location>
</feature>
<feature type="sequence variant" id="VAR_039411" description="In dbSNP:rs7213894.">
    <original>T</original>
    <variation>I</variation>
    <location>
        <position position="3600"/>
    </location>
</feature>
<feature type="sequence variant" id="VAR_085174" description="In SPGF45; decreased protein abundance; loss of inner dynein arm assembly; in spermatozoa from patients." evidence="6">
    <location>
        <begin position="3834"/>
        <end position="4427"/>
    </location>
</feature>
<feature type="sequence variant" id="VAR_085175" description="In SPGF45; uncertain significance; decreased protein abundance." evidence="6">
    <original>S</original>
    <variation>P</variation>
    <location>
        <position position="3835"/>
    </location>
</feature>
<feature type="sequence conflict" description="In Ref. 4; AAH34225." evidence="11" ref="4">
    <original>E</original>
    <variation>G</variation>
    <location>
        <position position="593"/>
    </location>
</feature>
<feature type="sequence variant" id="VAR_082806" description="In RNA edited version." evidence="11">
    <original>E</original>
    <variation>G</variation>
    <location sequence="Q9P225-3">
        <position position="812"/>
    </location>
</feature>
<feature type="sequence variant" id="VAR_082807" description="In RNA edited version." evidence="11">
    <original>E</original>
    <variation>G</variation>
    <location sequence="Q9P225-3">
        <position position="814"/>
    </location>
</feature>
<feature type="sequence variant" id="VAR_082808" description="In RNA edited version; dbSNP:rs2075418657." evidence="11">
    <original>T</original>
    <variation>A</variation>
    <location sequence="Q9P225-3">
        <position position="826"/>
    </location>
</feature>
<feature type="sequence variant" id="VAR_082809" description="In RNA edited version." evidence="11">
    <original>N</original>
    <variation>D</variation>
    <location sequence="Q9P225-3">
        <position position="833"/>
    </location>
</feature>
<feature type="sequence variant" id="VAR_082810" description="In RNA edited version." evidence="11">
    <original>K</original>
    <variation>E</variation>
    <location sequence="Q9P225-3">
        <position position="838"/>
    </location>
</feature>
<feature type="sequence variant" id="VAR_082811" description="In RNA edited version." evidence="11">
    <original>N</original>
    <variation>D</variation>
    <location sequence="Q9P225-3">
        <position position="839"/>
    </location>
</feature>
<feature type="sequence variant" id="VAR_082812" description="In RNA edited version." evidence="11">
    <original>K</original>
    <variation>E</variation>
    <location sequence="Q9P225-3">
        <position position="841"/>
    </location>
</feature>
<feature type="sequence variant" id="VAR_082813" description="In RNA edited version." evidence="11">
    <original>S</original>
    <variation>G</variation>
    <location sequence="Q9P225-3">
        <position position="843"/>
    </location>
</feature>
<feature type="sequence variant" id="VAR_082814" description="In RNA edited version; dbSNP:rs1019704300." evidence="11">
    <original>T</original>
    <variation>A</variation>
    <location sequence="Q9P225-3">
        <position position="855"/>
    </location>
</feature>
<feature type="sequence variant" id="VAR_082815" description="In RNA edited version." evidence="11">
    <original>E</original>
    <variation>G</variation>
    <location sequence="Q9P225-3">
        <position position="865"/>
    </location>
</feature>
<feature type="sequence variant" id="VAR_082816" description="In RNA edited version; dbSNP:rs2151162185." evidence="11">
    <original>Q</original>
    <variation>R</variation>
    <location sequence="Q9P225-3">
        <position position="869"/>
    </location>
</feature>
<feature type="sequence variant" id="VAR_082817" description="In RNA edited version." evidence="11">
    <original>Q</original>
    <variation>R</variation>
    <location sequence="Q9P225-3">
        <position position="872"/>
    </location>
</feature>
<evidence type="ECO:0000250" key="1"/>
<evidence type="ECO:0000250" key="2">
    <source>
        <dbReference type="UniProtKB" id="P0C6F1"/>
    </source>
</evidence>
<evidence type="ECO:0000255" key="3"/>
<evidence type="ECO:0000256" key="4">
    <source>
        <dbReference type="SAM" id="MobiDB-lite"/>
    </source>
</evidence>
<evidence type="ECO:0000269" key="5">
    <source>
    </source>
</evidence>
<evidence type="ECO:0000269" key="6">
    <source>
    </source>
</evidence>
<evidence type="ECO:0000269" key="7">
    <source>
    </source>
</evidence>
<evidence type="ECO:0000269" key="8">
    <source>
    </source>
</evidence>
<evidence type="ECO:0000303" key="9">
    <source>
    </source>
</evidence>
<evidence type="ECO:0000303" key="10">
    <source>
    </source>
</evidence>
<evidence type="ECO:0000305" key="11"/>
<evidence type="ECO:0000312" key="12">
    <source>
        <dbReference type="HGNC" id="HGNC:2948"/>
    </source>
</evidence>
<name>DYH2_HUMAN</name>
<dbReference type="EMBL" id="AB040936">
    <property type="protein sequence ID" value="BAA96027.2"/>
    <property type="status" value="ALT_INIT"/>
    <property type="molecule type" value="mRNA"/>
</dbReference>
<dbReference type="EMBL" id="AK128517">
    <property type="status" value="NOT_ANNOTATED_CDS"/>
    <property type="molecule type" value="mRNA"/>
</dbReference>
<dbReference type="EMBL" id="AK292607">
    <property type="protein sequence ID" value="BAF85296.1"/>
    <property type="molecule type" value="mRNA"/>
</dbReference>
<dbReference type="EMBL" id="AC025335">
    <property type="status" value="NOT_ANNOTATED_CDS"/>
    <property type="molecule type" value="Genomic_DNA"/>
</dbReference>
<dbReference type="EMBL" id="AC087388">
    <property type="status" value="NOT_ANNOTATED_CDS"/>
    <property type="molecule type" value="Genomic_DNA"/>
</dbReference>
<dbReference type="EMBL" id="BC034225">
    <property type="protein sequence ID" value="AAH34225.1"/>
    <property type="molecule type" value="mRNA"/>
</dbReference>
<dbReference type="EMBL" id="U83570">
    <property type="protein sequence ID" value="AAB82760.1"/>
    <property type="molecule type" value="Genomic_DNA"/>
</dbReference>
<dbReference type="CCDS" id="CCDS32551.1">
    <molecule id="Q9P225-1"/>
</dbReference>
<dbReference type="CCDS" id="CCDS76937.1">
    <molecule id="Q9P225-3"/>
</dbReference>
<dbReference type="RefSeq" id="NP_001290199.1">
    <molecule id="Q9P225-3"/>
    <property type="nucleotide sequence ID" value="NM_001303270.2"/>
</dbReference>
<dbReference type="RefSeq" id="NP_065928.2">
    <molecule id="Q9P225-1"/>
    <property type="nucleotide sequence ID" value="NM_020877.5"/>
</dbReference>
<dbReference type="RefSeq" id="XP_011521969.1">
    <molecule id="Q9P225-1"/>
    <property type="nucleotide sequence ID" value="XM_011523667.3"/>
</dbReference>
<dbReference type="RefSeq" id="XP_054171133.1">
    <molecule id="Q9P225-3"/>
    <property type="nucleotide sequence ID" value="XM_054315158.1"/>
</dbReference>
<dbReference type="PDB" id="8J07">
    <property type="method" value="EM"/>
    <property type="resolution" value="4.10 A"/>
    <property type="chains" value="k9=1-4427"/>
</dbReference>
<dbReference type="PDBsum" id="8J07"/>
<dbReference type="EMDB" id="EMD-35888"/>
<dbReference type="SMR" id="Q9P225"/>
<dbReference type="BioGRID" id="127007">
    <property type="interactions" value="37"/>
</dbReference>
<dbReference type="FunCoup" id="Q9P225">
    <property type="interactions" value="90"/>
</dbReference>
<dbReference type="IntAct" id="Q9P225">
    <property type="interactions" value="8"/>
</dbReference>
<dbReference type="MINT" id="Q9P225"/>
<dbReference type="STRING" id="9606.ENSP00000458355"/>
<dbReference type="GlyGen" id="Q9P225">
    <property type="glycosylation" value="3 sites, 1 O-linked glycan (1 site)"/>
</dbReference>
<dbReference type="iPTMnet" id="Q9P225"/>
<dbReference type="PhosphoSitePlus" id="Q9P225"/>
<dbReference type="BioMuta" id="DNAH2"/>
<dbReference type="DMDM" id="172044680"/>
<dbReference type="jPOST" id="Q9P225"/>
<dbReference type="MassIVE" id="Q9P225"/>
<dbReference type="PaxDb" id="9606-ENSP00000458355"/>
<dbReference type="PeptideAtlas" id="Q9P225"/>
<dbReference type="ProteomicsDB" id="83715">
    <molecule id="Q9P225-1"/>
</dbReference>
<dbReference type="ProteomicsDB" id="83716">
    <molecule id="Q9P225-2"/>
</dbReference>
<dbReference type="ProteomicsDB" id="83717">
    <molecule id="Q9P225-3"/>
</dbReference>
<dbReference type="TopDownProteomics" id="Q9P225-3">
    <molecule id="Q9P225-3"/>
</dbReference>
<dbReference type="Antibodypedia" id="66685">
    <property type="antibodies" value="64 antibodies from 18 providers"/>
</dbReference>
<dbReference type="DNASU" id="146754"/>
<dbReference type="Ensembl" id="ENST00000389173.6">
    <molecule id="Q9P225-1"/>
    <property type="protein sequence ID" value="ENSP00000373825.2"/>
    <property type="gene ID" value="ENSG00000183914.15"/>
</dbReference>
<dbReference type="Ensembl" id="ENST00000570791.5">
    <molecule id="Q9P225-3"/>
    <property type="protein sequence ID" value="ENSP00000460245.1"/>
    <property type="gene ID" value="ENSG00000183914.15"/>
</dbReference>
<dbReference type="Ensembl" id="ENST00000572933.6">
    <molecule id="Q9P225-1"/>
    <property type="protein sequence ID" value="ENSP00000458355.1"/>
    <property type="gene ID" value="ENSG00000183914.15"/>
</dbReference>
<dbReference type="GeneID" id="146754"/>
<dbReference type="KEGG" id="hsa:146754"/>
<dbReference type="MANE-Select" id="ENST00000572933.6">
    <property type="protein sequence ID" value="ENSP00000458355.1"/>
    <property type="RefSeq nucleotide sequence ID" value="NM_020877.5"/>
    <property type="RefSeq protein sequence ID" value="NP_065928.2"/>
</dbReference>
<dbReference type="UCSC" id="uc002git.3">
    <molecule id="Q9P225-1"/>
    <property type="organism name" value="human"/>
</dbReference>
<dbReference type="AGR" id="HGNC:2948"/>
<dbReference type="CTD" id="146754"/>
<dbReference type="DisGeNET" id="146754"/>
<dbReference type="GeneCards" id="DNAH2"/>
<dbReference type="HGNC" id="HGNC:2948">
    <property type="gene designation" value="DNAH2"/>
</dbReference>
<dbReference type="HPA" id="ENSG00000183914">
    <property type="expression patterns" value="Tissue enhanced (fallopian tube, parathyroid gland, retina)"/>
</dbReference>
<dbReference type="MalaCards" id="DNAH2"/>
<dbReference type="MIM" id="603333">
    <property type="type" value="gene"/>
</dbReference>
<dbReference type="MIM" id="619094">
    <property type="type" value="phenotype"/>
</dbReference>
<dbReference type="neXtProt" id="NX_Q9P225"/>
<dbReference type="OpenTargets" id="ENSG00000183914"/>
<dbReference type="PharmGKB" id="PA27401"/>
<dbReference type="VEuPathDB" id="HostDB:ENSG00000183914"/>
<dbReference type="eggNOG" id="KOG3595">
    <property type="taxonomic scope" value="Eukaryota"/>
</dbReference>
<dbReference type="GeneTree" id="ENSGT00940000157623"/>
<dbReference type="HOGENOM" id="CLU_000038_0_3_1"/>
<dbReference type="InParanoid" id="Q9P225"/>
<dbReference type="OMA" id="ILKNDMQ"/>
<dbReference type="OrthoDB" id="10251809at2759"/>
<dbReference type="PAN-GO" id="Q9P225">
    <property type="GO annotations" value="7 GO annotations based on evolutionary models"/>
</dbReference>
<dbReference type="PhylomeDB" id="Q9P225"/>
<dbReference type="TreeFam" id="TF316836"/>
<dbReference type="PathwayCommons" id="Q9P225"/>
<dbReference type="SignaLink" id="Q9P225"/>
<dbReference type="BioGRID-ORCS" id="146754">
    <property type="hits" value="14 hits in 1146 CRISPR screens"/>
</dbReference>
<dbReference type="ChiTaRS" id="DNAH2">
    <property type="organism name" value="human"/>
</dbReference>
<dbReference type="GenomeRNAi" id="146754"/>
<dbReference type="Pharos" id="Q9P225">
    <property type="development level" value="Tbio"/>
</dbReference>
<dbReference type="PRO" id="PR:Q9P225"/>
<dbReference type="Proteomes" id="UP000005640">
    <property type="component" value="Chromosome 17"/>
</dbReference>
<dbReference type="RNAct" id="Q9P225">
    <property type="molecule type" value="protein"/>
</dbReference>
<dbReference type="Bgee" id="ENSG00000183914">
    <property type="expression patterns" value="Expressed in bronchial epithelial cell and 102 other cell types or tissues"/>
</dbReference>
<dbReference type="ExpressionAtlas" id="Q9P225">
    <property type="expression patterns" value="baseline and differential"/>
</dbReference>
<dbReference type="GO" id="GO:0097729">
    <property type="term" value="C:9+2 motile cilium"/>
    <property type="evidence" value="ECO:0000318"/>
    <property type="project" value="GO_Central"/>
</dbReference>
<dbReference type="GO" id="GO:0005858">
    <property type="term" value="C:axonemal dynein complex"/>
    <property type="evidence" value="ECO:0000303"/>
    <property type="project" value="UniProtKB"/>
</dbReference>
<dbReference type="GO" id="GO:0005930">
    <property type="term" value="C:axoneme"/>
    <property type="evidence" value="ECO:0000314"/>
    <property type="project" value="UniProtKB"/>
</dbReference>
<dbReference type="GO" id="GO:0030286">
    <property type="term" value="C:dynein complex"/>
    <property type="evidence" value="ECO:0000318"/>
    <property type="project" value="GO_Central"/>
</dbReference>
<dbReference type="GO" id="GO:0036156">
    <property type="term" value="C:inner dynein arm"/>
    <property type="evidence" value="ECO:0000315"/>
    <property type="project" value="UniProtKB"/>
</dbReference>
<dbReference type="GO" id="GO:0005874">
    <property type="term" value="C:microtubule"/>
    <property type="evidence" value="ECO:0007669"/>
    <property type="project" value="UniProtKB-KW"/>
</dbReference>
<dbReference type="GO" id="GO:0031514">
    <property type="term" value="C:motile cilium"/>
    <property type="evidence" value="ECO:0000314"/>
    <property type="project" value="UniProtKB"/>
</dbReference>
<dbReference type="GO" id="GO:0036126">
    <property type="term" value="C:sperm flagellum"/>
    <property type="evidence" value="ECO:0000314"/>
    <property type="project" value="UniProtKB"/>
</dbReference>
<dbReference type="GO" id="GO:0005524">
    <property type="term" value="F:ATP binding"/>
    <property type="evidence" value="ECO:0007669"/>
    <property type="project" value="UniProtKB-KW"/>
</dbReference>
<dbReference type="GO" id="GO:0016887">
    <property type="term" value="F:ATP hydrolysis activity"/>
    <property type="evidence" value="ECO:0007669"/>
    <property type="project" value="InterPro"/>
</dbReference>
<dbReference type="GO" id="GO:0045505">
    <property type="term" value="F:dynein intermediate chain binding"/>
    <property type="evidence" value="ECO:0000318"/>
    <property type="project" value="GO_Central"/>
</dbReference>
<dbReference type="GO" id="GO:0051959">
    <property type="term" value="F:dynein light intermediate chain binding"/>
    <property type="evidence" value="ECO:0000318"/>
    <property type="project" value="GO_Central"/>
</dbReference>
<dbReference type="GO" id="GO:0003777">
    <property type="term" value="F:microtubule motor activity"/>
    <property type="evidence" value="ECO:0000303"/>
    <property type="project" value="UniProtKB"/>
</dbReference>
<dbReference type="GO" id="GO:0008569">
    <property type="term" value="F:minus-end-directed microtubule motor activity"/>
    <property type="evidence" value="ECO:0000318"/>
    <property type="project" value="GO_Central"/>
</dbReference>
<dbReference type="GO" id="GO:0060294">
    <property type="term" value="P:cilium movement involved in cell motility"/>
    <property type="evidence" value="ECO:0000318"/>
    <property type="project" value="GO_Central"/>
</dbReference>
<dbReference type="GO" id="GO:0060285">
    <property type="term" value="P:cilium-dependent cell motility"/>
    <property type="evidence" value="ECO:0000315"/>
    <property type="project" value="UniProtKB"/>
</dbReference>
<dbReference type="GO" id="GO:0036159">
    <property type="term" value="P:inner dynein arm assembly"/>
    <property type="evidence" value="ECO:0000315"/>
    <property type="project" value="UniProtKB"/>
</dbReference>
<dbReference type="CDD" id="cd00009">
    <property type="entry name" value="AAA"/>
    <property type="match status" value="1"/>
</dbReference>
<dbReference type="FunFam" id="3.40.50.300:FF:000153">
    <property type="entry name" value="Dynein axonemal heavy chain 1"/>
    <property type="match status" value="1"/>
</dbReference>
<dbReference type="FunFam" id="1.10.8.710:FF:000001">
    <property type="entry name" value="Dynein axonemal heavy chain 2"/>
    <property type="match status" value="1"/>
</dbReference>
<dbReference type="FunFam" id="1.10.8.720:FF:000008">
    <property type="entry name" value="Dynein axonemal heavy chain 2"/>
    <property type="match status" value="1"/>
</dbReference>
<dbReference type="FunFam" id="1.10.8.1220:FF:000001">
    <property type="entry name" value="Dynein axonemal heavy chain 5"/>
    <property type="match status" value="1"/>
</dbReference>
<dbReference type="FunFam" id="3.40.50.300:FF:002141">
    <property type="entry name" value="Dynein heavy chain"/>
    <property type="match status" value="1"/>
</dbReference>
<dbReference type="FunFam" id="3.20.180.20:FF:000003">
    <property type="entry name" value="Dynein heavy chain 12, axonemal"/>
    <property type="match status" value="1"/>
</dbReference>
<dbReference type="FunFam" id="1.10.287.2620:FF:000002">
    <property type="entry name" value="Dynein heavy chain 2, axonemal"/>
    <property type="match status" value="1"/>
</dbReference>
<dbReference type="FunFam" id="3.40.50.300:FF:000815">
    <property type="entry name" value="Dynein heavy chain 2, axonemal"/>
    <property type="match status" value="1"/>
</dbReference>
<dbReference type="FunFam" id="1.20.1270.280:FF:000007">
    <property type="entry name" value="dynein heavy chain 2, axonemal"/>
    <property type="match status" value="1"/>
</dbReference>
<dbReference type="FunFam" id="1.20.140.100:FF:000006">
    <property type="entry name" value="dynein heavy chain 2, axonemal"/>
    <property type="match status" value="1"/>
</dbReference>
<dbReference type="FunFam" id="1.20.920.20:FF:000014">
    <property type="entry name" value="dynein heavy chain 2, axonemal"/>
    <property type="match status" value="1"/>
</dbReference>
<dbReference type="FunFam" id="3.10.490.20:FF:000008">
    <property type="entry name" value="dynein heavy chain 2, axonemal"/>
    <property type="match status" value="1"/>
</dbReference>
<dbReference type="FunFam" id="3.40.50.300:FF:000044">
    <property type="entry name" value="Dynein heavy chain 5, axonemal"/>
    <property type="match status" value="1"/>
</dbReference>
<dbReference type="FunFam" id="1.10.472.130:FF:000003">
    <property type="entry name" value="Dynein, axonemal, heavy chain 2"/>
    <property type="match status" value="1"/>
</dbReference>
<dbReference type="FunFam" id="1.20.58.1120:FF:000012">
    <property type="entry name" value="Dynein, axonemal, heavy chain 2"/>
    <property type="match status" value="1"/>
</dbReference>
<dbReference type="FunFam" id="1.20.920.30:FF:000005">
    <property type="entry name" value="Dynein, axonemal, heavy chain 2"/>
    <property type="match status" value="1"/>
</dbReference>
<dbReference type="FunFam" id="3.40.50.300:FF:000049">
    <property type="entry name" value="Dynein, axonemal, heavy chain 5"/>
    <property type="match status" value="1"/>
</dbReference>
<dbReference type="Gene3D" id="1.10.287.2620">
    <property type="match status" value="1"/>
</dbReference>
<dbReference type="Gene3D" id="1.10.472.130">
    <property type="match status" value="1"/>
</dbReference>
<dbReference type="Gene3D" id="1.10.8.1220">
    <property type="match status" value="1"/>
</dbReference>
<dbReference type="Gene3D" id="1.10.8.710">
    <property type="match status" value="1"/>
</dbReference>
<dbReference type="Gene3D" id="1.20.1270.280">
    <property type="match status" value="1"/>
</dbReference>
<dbReference type="Gene3D" id="1.20.58.1120">
    <property type="match status" value="1"/>
</dbReference>
<dbReference type="Gene3D" id="1.20.920.20">
    <property type="match status" value="1"/>
</dbReference>
<dbReference type="Gene3D" id="1.20.920.30">
    <property type="match status" value="1"/>
</dbReference>
<dbReference type="Gene3D" id="3.10.490.20">
    <property type="match status" value="1"/>
</dbReference>
<dbReference type="Gene3D" id="6.10.140.1060">
    <property type="match status" value="1"/>
</dbReference>
<dbReference type="Gene3D" id="1.20.140.100">
    <property type="entry name" value="Dynein heavy chain, N-terminal domain 2"/>
    <property type="match status" value="1"/>
</dbReference>
<dbReference type="Gene3D" id="3.20.180.20">
    <property type="entry name" value="Dynein heavy chain, N-terminal domain 2"/>
    <property type="match status" value="1"/>
</dbReference>
<dbReference type="Gene3D" id="3.40.50.300">
    <property type="entry name" value="P-loop containing nucleotide triphosphate hydrolases"/>
    <property type="match status" value="5"/>
</dbReference>
<dbReference type="Gene3D" id="1.10.8.720">
    <property type="entry name" value="Region D6 of dynein motor"/>
    <property type="match status" value="1"/>
</dbReference>
<dbReference type="InterPro" id="IPR003593">
    <property type="entry name" value="AAA+_ATPase"/>
</dbReference>
<dbReference type="InterPro" id="IPR035699">
    <property type="entry name" value="AAA_6"/>
</dbReference>
<dbReference type="InterPro" id="IPR035706">
    <property type="entry name" value="AAA_9"/>
</dbReference>
<dbReference type="InterPro" id="IPR041658">
    <property type="entry name" value="AAA_lid_11"/>
</dbReference>
<dbReference type="InterPro" id="IPR042219">
    <property type="entry name" value="AAA_lid_11_sf"/>
</dbReference>
<dbReference type="InterPro" id="IPR026983">
    <property type="entry name" value="DHC"/>
</dbReference>
<dbReference type="InterPro" id="IPR041589">
    <property type="entry name" value="DNAH3_AAA_lid_1"/>
</dbReference>
<dbReference type="InterPro" id="IPR056759">
    <property type="entry name" value="DYH2-5-8_CC"/>
</dbReference>
<dbReference type="InterPro" id="IPR042222">
    <property type="entry name" value="Dynein_2_N"/>
</dbReference>
<dbReference type="InterPro" id="IPR043157">
    <property type="entry name" value="Dynein_AAA1S"/>
</dbReference>
<dbReference type="InterPro" id="IPR041466">
    <property type="entry name" value="Dynein_AAA5_ext"/>
</dbReference>
<dbReference type="InterPro" id="IPR041228">
    <property type="entry name" value="Dynein_C"/>
</dbReference>
<dbReference type="InterPro" id="IPR043160">
    <property type="entry name" value="Dynein_C_barrel"/>
</dbReference>
<dbReference type="InterPro" id="IPR024743">
    <property type="entry name" value="Dynein_HC_stalk"/>
</dbReference>
<dbReference type="InterPro" id="IPR024317">
    <property type="entry name" value="Dynein_heavy_chain_D4_dom"/>
</dbReference>
<dbReference type="InterPro" id="IPR004273">
    <property type="entry name" value="Dynein_heavy_D6_P-loop"/>
</dbReference>
<dbReference type="InterPro" id="IPR013602">
    <property type="entry name" value="Dynein_heavy_linker"/>
</dbReference>
<dbReference type="InterPro" id="IPR013594">
    <property type="entry name" value="Dynein_heavy_tail"/>
</dbReference>
<dbReference type="InterPro" id="IPR042228">
    <property type="entry name" value="Dynein_linker_3"/>
</dbReference>
<dbReference type="InterPro" id="IPR027417">
    <property type="entry name" value="P-loop_NTPase"/>
</dbReference>
<dbReference type="PANTHER" id="PTHR46532:SF11">
    <property type="entry name" value="DYNEIN AXONEMAL HEAVY CHAIN 12"/>
    <property type="match status" value="1"/>
</dbReference>
<dbReference type="PANTHER" id="PTHR46532">
    <property type="entry name" value="MALE FERTILITY FACTOR KL5"/>
    <property type="match status" value="1"/>
</dbReference>
<dbReference type="Pfam" id="PF12774">
    <property type="entry name" value="AAA_6"/>
    <property type="match status" value="1"/>
</dbReference>
<dbReference type="Pfam" id="PF12775">
    <property type="entry name" value="AAA_7"/>
    <property type="match status" value="1"/>
</dbReference>
<dbReference type="Pfam" id="PF12780">
    <property type="entry name" value="AAA_8"/>
    <property type="match status" value="1"/>
</dbReference>
<dbReference type="Pfam" id="PF12781">
    <property type="entry name" value="AAA_9"/>
    <property type="match status" value="1"/>
</dbReference>
<dbReference type="Pfam" id="PF17857">
    <property type="entry name" value="AAA_lid_1"/>
    <property type="match status" value="1"/>
</dbReference>
<dbReference type="Pfam" id="PF18198">
    <property type="entry name" value="AAA_lid_11"/>
    <property type="match status" value="1"/>
</dbReference>
<dbReference type="Pfam" id="PF08385">
    <property type="entry name" value="DHC_N1"/>
    <property type="match status" value="2"/>
</dbReference>
<dbReference type="Pfam" id="PF08393">
    <property type="entry name" value="DHC_N2"/>
    <property type="match status" value="1"/>
</dbReference>
<dbReference type="Pfam" id="PF25007">
    <property type="entry name" value="DYH2-5-8_CC"/>
    <property type="match status" value="1"/>
</dbReference>
<dbReference type="Pfam" id="PF17852">
    <property type="entry name" value="Dynein_AAA_lid"/>
    <property type="match status" value="1"/>
</dbReference>
<dbReference type="Pfam" id="PF18199">
    <property type="entry name" value="Dynein_C"/>
    <property type="match status" value="1"/>
</dbReference>
<dbReference type="Pfam" id="PF03028">
    <property type="entry name" value="Dynein_heavy"/>
    <property type="match status" value="1"/>
</dbReference>
<dbReference type="Pfam" id="PF12777">
    <property type="entry name" value="MT"/>
    <property type="match status" value="1"/>
</dbReference>
<dbReference type="SMART" id="SM00382">
    <property type="entry name" value="AAA"/>
    <property type="match status" value="2"/>
</dbReference>
<dbReference type="SUPFAM" id="SSF52540">
    <property type="entry name" value="P-loop containing nucleoside triphosphate hydrolases"/>
    <property type="match status" value="4"/>
</dbReference>
<reference key="1">
    <citation type="journal article" date="2000" name="DNA Res.">
        <title>Prediction of the coding sequences of unidentified human genes. XVII. The complete sequences of 100 new cDNA clones from brain which code for large proteins in vitro.</title>
        <authorList>
            <person name="Nagase T."/>
            <person name="Kikuno R."/>
            <person name="Ishikawa K."/>
            <person name="Hirosawa M."/>
            <person name="Ohara O."/>
        </authorList>
    </citation>
    <scope>NUCLEOTIDE SEQUENCE [LARGE SCALE MRNA] (ISOFORM 1)</scope>
    <source>
        <tissue>Brain</tissue>
    </source>
</reference>
<reference key="2">
    <citation type="journal article" date="2004" name="Nat. Genet.">
        <title>Complete sequencing and characterization of 21,243 full-length human cDNAs.</title>
        <authorList>
            <person name="Ota T."/>
            <person name="Suzuki Y."/>
            <person name="Nishikawa T."/>
            <person name="Otsuki T."/>
            <person name="Sugiyama T."/>
            <person name="Irie R."/>
            <person name="Wakamatsu A."/>
            <person name="Hayashi K."/>
            <person name="Sato H."/>
            <person name="Nagai K."/>
            <person name="Kimura K."/>
            <person name="Makita H."/>
            <person name="Sekine M."/>
            <person name="Obayashi M."/>
            <person name="Nishi T."/>
            <person name="Shibahara T."/>
            <person name="Tanaka T."/>
            <person name="Ishii S."/>
            <person name="Yamamoto J."/>
            <person name="Saito K."/>
            <person name="Kawai Y."/>
            <person name="Isono Y."/>
            <person name="Nakamura Y."/>
            <person name="Nagahari K."/>
            <person name="Murakami K."/>
            <person name="Yasuda T."/>
            <person name="Iwayanagi T."/>
            <person name="Wagatsuma M."/>
            <person name="Shiratori A."/>
            <person name="Sudo H."/>
            <person name="Hosoiri T."/>
            <person name="Kaku Y."/>
            <person name="Kodaira H."/>
            <person name="Kondo H."/>
            <person name="Sugawara M."/>
            <person name="Takahashi M."/>
            <person name="Kanda K."/>
            <person name="Yokoi T."/>
            <person name="Furuya T."/>
            <person name="Kikkawa E."/>
            <person name="Omura Y."/>
            <person name="Abe K."/>
            <person name="Kamihara K."/>
            <person name="Katsuta N."/>
            <person name="Sato K."/>
            <person name="Tanikawa M."/>
            <person name="Yamazaki M."/>
            <person name="Ninomiya K."/>
            <person name="Ishibashi T."/>
            <person name="Yamashita H."/>
            <person name="Murakawa K."/>
            <person name="Fujimori K."/>
            <person name="Tanai H."/>
            <person name="Kimata M."/>
            <person name="Watanabe M."/>
            <person name="Hiraoka S."/>
            <person name="Chiba Y."/>
            <person name="Ishida S."/>
            <person name="Ono Y."/>
            <person name="Takiguchi S."/>
            <person name="Watanabe S."/>
            <person name="Yosida M."/>
            <person name="Hotuta T."/>
            <person name="Kusano J."/>
            <person name="Kanehori K."/>
            <person name="Takahashi-Fujii A."/>
            <person name="Hara H."/>
            <person name="Tanase T.-O."/>
            <person name="Nomura Y."/>
            <person name="Togiya S."/>
            <person name="Komai F."/>
            <person name="Hara R."/>
            <person name="Takeuchi K."/>
            <person name="Arita M."/>
            <person name="Imose N."/>
            <person name="Musashino K."/>
            <person name="Yuuki H."/>
            <person name="Oshima A."/>
            <person name="Sasaki N."/>
            <person name="Aotsuka S."/>
            <person name="Yoshikawa Y."/>
            <person name="Matsunawa H."/>
            <person name="Ichihara T."/>
            <person name="Shiohata N."/>
            <person name="Sano S."/>
            <person name="Moriya S."/>
            <person name="Momiyama H."/>
            <person name="Satoh N."/>
            <person name="Takami S."/>
            <person name="Terashima Y."/>
            <person name="Suzuki O."/>
            <person name="Nakagawa S."/>
            <person name="Senoh A."/>
            <person name="Mizoguchi H."/>
            <person name="Goto Y."/>
            <person name="Shimizu F."/>
            <person name="Wakebe H."/>
            <person name="Hishigaki H."/>
            <person name="Watanabe T."/>
            <person name="Sugiyama A."/>
            <person name="Takemoto M."/>
            <person name="Kawakami B."/>
            <person name="Yamazaki M."/>
            <person name="Watanabe K."/>
            <person name="Kumagai A."/>
            <person name="Itakura S."/>
            <person name="Fukuzumi Y."/>
            <person name="Fujimori Y."/>
            <person name="Komiyama M."/>
            <person name="Tashiro H."/>
            <person name="Tanigami A."/>
            <person name="Fujiwara T."/>
            <person name="Ono T."/>
            <person name="Yamada K."/>
            <person name="Fujii Y."/>
            <person name="Ozaki K."/>
            <person name="Hirao M."/>
            <person name="Ohmori Y."/>
            <person name="Kawabata A."/>
            <person name="Hikiji T."/>
            <person name="Kobatake N."/>
            <person name="Inagaki H."/>
            <person name="Ikema Y."/>
            <person name="Okamoto S."/>
            <person name="Okitani R."/>
            <person name="Kawakami T."/>
            <person name="Noguchi S."/>
            <person name="Itoh T."/>
            <person name="Shigeta K."/>
            <person name="Senba T."/>
            <person name="Matsumura K."/>
            <person name="Nakajima Y."/>
            <person name="Mizuno T."/>
            <person name="Morinaga M."/>
            <person name="Sasaki M."/>
            <person name="Togashi T."/>
            <person name="Oyama M."/>
            <person name="Hata H."/>
            <person name="Watanabe M."/>
            <person name="Komatsu T."/>
            <person name="Mizushima-Sugano J."/>
            <person name="Satoh T."/>
            <person name="Shirai Y."/>
            <person name="Takahashi Y."/>
            <person name="Nakagawa K."/>
            <person name="Okumura K."/>
            <person name="Nagase T."/>
            <person name="Nomura N."/>
            <person name="Kikuchi H."/>
            <person name="Masuho Y."/>
            <person name="Yamashita R."/>
            <person name="Nakai K."/>
            <person name="Yada T."/>
            <person name="Nakamura Y."/>
            <person name="Ohara O."/>
            <person name="Isogai T."/>
            <person name="Sugano S."/>
        </authorList>
    </citation>
    <scope>NUCLEOTIDE SEQUENCE [LARGE SCALE MRNA] (ISOFORM 3)</scope>
    <scope>NUCLEOTIDE SEQUENCE [LARGE SCALE MRNA] OF 3013-4427 (ISOFORM 2)</scope>
    <source>
        <tissue>Testis</tissue>
        <tissue>Trachea</tissue>
    </source>
</reference>
<reference key="3">
    <citation type="journal article" date="2006" name="Nature">
        <title>DNA sequence of human chromosome 17 and analysis of rearrangement in the human lineage.</title>
        <authorList>
            <person name="Zody M.C."/>
            <person name="Garber M."/>
            <person name="Adams D.J."/>
            <person name="Sharpe T."/>
            <person name="Harrow J."/>
            <person name="Lupski J.R."/>
            <person name="Nicholson C."/>
            <person name="Searle S.M."/>
            <person name="Wilming L."/>
            <person name="Young S.K."/>
            <person name="Abouelleil A."/>
            <person name="Allen N.R."/>
            <person name="Bi W."/>
            <person name="Bloom T."/>
            <person name="Borowsky M.L."/>
            <person name="Bugalter B.E."/>
            <person name="Butler J."/>
            <person name="Chang J.L."/>
            <person name="Chen C.-K."/>
            <person name="Cook A."/>
            <person name="Corum B."/>
            <person name="Cuomo C.A."/>
            <person name="de Jong P.J."/>
            <person name="DeCaprio D."/>
            <person name="Dewar K."/>
            <person name="FitzGerald M."/>
            <person name="Gilbert J."/>
            <person name="Gibson R."/>
            <person name="Gnerre S."/>
            <person name="Goldstein S."/>
            <person name="Grafham D.V."/>
            <person name="Grocock R."/>
            <person name="Hafez N."/>
            <person name="Hagopian D.S."/>
            <person name="Hart E."/>
            <person name="Norman C.H."/>
            <person name="Humphray S."/>
            <person name="Jaffe D.B."/>
            <person name="Jones M."/>
            <person name="Kamal M."/>
            <person name="Khodiyar V.K."/>
            <person name="LaButti K."/>
            <person name="Laird G."/>
            <person name="Lehoczky J."/>
            <person name="Liu X."/>
            <person name="Lokyitsang T."/>
            <person name="Loveland J."/>
            <person name="Lui A."/>
            <person name="Macdonald P."/>
            <person name="Major J.E."/>
            <person name="Matthews L."/>
            <person name="Mauceli E."/>
            <person name="McCarroll S.A."/>
            <person name="Mihalev A.H."/>
            <person name="Mudge J."/>
            <person name="Nguyen C."/>
            <person name="Nicol R."/>
            <person name="O'Leary S.B."/>
            <person name="Osoegawa K."/>
            <person name="Schwartz D.C."/>
            <person name="Shaw-Smith C."/>
            <person name="Stankiewicz P."/>
            <person name="Steward C."/>
            <person name="Swarbreck D."/>
            <person name="Venkataraman V."/>
            <person name="Whittaker C.A."/>
            <person name="Yang X."/>
            <person name="Zimmer A.R."/>
            <person name="Bradley A."/>
            <person name="Hubbard T."/>
            <person name="Birren B.W."/>
            <person name="Rogers J."/>
            <person name="Lander E.S."/>
            <person name="Nusbaum C."/>
        </authorList>
    </citation>
    <scope>NUCLEOTIDE SEQUENCE [LARGE SCALE GENOMIC DNA]</scope>
</reference>
<reference key="4">
    <citation type="journal article" date="2004" name="Genome Res.">
        <title>The status, quality, and expansion of the NIH full-length cDNA project: the Mammalian Gene Collection (MGC).</title>
        <authorList>
            <consortium name="The MGC Project Team"/>
        </authorList>
    </citation>
    <scope>NUCLEOTIDE SEQUENCE [LARGE SCALE MRNA] (ISOFORM 3)</scope>
    <source>
        <tissue>Testis</tissue>
    </source>
</reference>
<reference key="5">
    <citation type="journal article" date="1997" name="FEBS Lett.">
        <title>Isolation of several human axonemal dynein heavy chain genes: genomic structure of the catalytic site, phylogenetic analysis and chromosomal assignment.</title>
        <authorList>
            <person name="Chapelin C."/>
            <person name="Duriez B."/>
            <person name="Magnino F."/>
            <person name="Goossens M."/>
            <person name="Escudier E."/>
            <person name="Amselem S."/>
        </authorList>
    </citation>
    <scope>NUCLEOTIDE SEQUENCE [MRNA] OF 1820-1902 (ISOFORM 1)</scope>
    <scope>TISSUE SPECIFICITY</scope>
</reference>
<reference key="6">
    <citation type="journal article" date="2010" name="Nat. Chem. Biol.">
        <title>Inosine cyanoethylation identifies A-to-I RNA editing sites in the human transcriptome.</title>
        <authorList>
            <person name="Sakurai M."/>
            <person name="Yano T."/>
            <person name="Kawabata H."/>
            <person name="Ueda H."/>
            <person name="Suzuki T."/>
        </authorList>
    </citation>
    <scope>RNA EDITING VARIANTS (ISOFORM 3)</scope>
    <source>
        <tissue>Brain</tissue>
    </source>
</reference>
<reference key="7">
    <citation type="journal article" date="2019" name="Am. J. Hum. Genet.">
        <title>Mutations in DNAH17, Encoding a Sperm-Specific Axonemal Outer Dynein Arm Heavy Chain, Cause Isolated Male Infertility Due to Asthenozoospermia.</title>
        <authorList>
            <person name="Whitfield M."/>
            <person name="Thomas L."/>
            <person name="Bequignon E."/>
            <person name="Schmitt A."/>
            <person name="Stouvenel L."/>
            <person name="Montantin G."/>
            <person name="Tissier S."/>
            <person name="Duquesnoy P."/>
            <person name="Copin B."/>
            <person name="Chantot S."/>
            <person name="Dastot F."/>
            <person name="Faucon C."/>
            <person name="Barbotin A.L."/>
            <person name="Loyens A."/>
            <person name="Siffroi J.P."/>
            <person name="Papon J.F."/>
            <person name="Escudier E."/>
            <person name="Amselem S."/>
            <person name="Mitchell V."/>
            <person name="Toure A."/>
            <person name="Legendre M."/>
        </authorList>
    </citation>
    <scope>TISSUE SPECIFICITY</scope>
    <scope>SUBCELLULAR LOCATION</scope>
</reference>
<reference key="8">
    <citation type="journal article" date="2019" name="Clin. Genet.">
        <title>DNAH2 is a novel candidate gene associated with multiple morphological abnormalities of the sperm flagella.</title>
        <authorList>
            <person name="Li Y."/>
            <person name="Sha Y."/>
            <person name="Wang X."/>
            <person name="Ding L."/>
            <person name="Liu W."/>
            <person name="Ji Z."/>
            <person name="Mei L."/>
            <person name="Huang X."/>
            <person name="Lin S."/>
            <person name="Kong S."/>
            <person name="Lu J."/>
            <person name="Qin W."/>
            <person name="Zhang X."/>
            <person name="Zhuang J."/>
            <person name="Tang Y."/>
            <person name="Lu Z."/>
        </authorList>
    </citation>
    <scope>VARIANTS SPGF45 CYS-1924; ARG-2320; TRP-3100; 3834-ARG--SER-4427 DEL AND PRO-3835</scope>
    <scope>CHARACTERIZATION OF VARIANTS SPGF45 CYS-1924; ARG-2320; TRP-3100; 3834-ARG--SER-4427 DEL AND PRO-3835</scope>
    <scope>FUNCTION</scope>
    <scope>SUBUNIT</scope>
    <scope>SUBCELLULAR LOCATION</scope>
</reference>